<organism>
    <name type="scientific">Dictyostelium discoideum</name>
    <name type="common">Social amoeba</name>
    <dbReference type="NCBI Taxonomy" id="44689"/>
    <lineage>
        <taxon>Eukaryota</taxon>
        <taxon>Amoebozoa</taxon>
        <taxon>Evosea</taxon>
        <taxon>Eumycetozoa</taxon>
        <taxon>Dictyostelia</taxon>
        <taxon>Dictyosteliales</taxon>
        <taxon>Dictyosteliaceae</taxon>
        <taxon>Dictyostelium</taxon>
    </lineage>
</organism>
<proteinExistence type="inferred from homology"/>
<protein>
    <recommendedName>
        <fullName>Eukaryotic translation initiation factor 1A</fullName>
        <shortName>eIF-1A</shortName>
    </recommendedName>
    <alternativeName>
        <fullName>Eukaryotic translation initiation factor 4C</fullName>
        <shortName>eIF-4C</shortName>
    </alternativeName>
</protein>
<comment type="function">
    <text evidence="1">Seems to be required for maximal rate of protein biosynthesis. Enhances ribosome dissociation into subunits and stabilizes the binding of the initiator Met-tRNA(I) to 40 S ribosomal subunits (By similarity).</text>
</comment>
<comment type="similarity">
    <text evidence="3">Belongs to the eIF-1A family.</text>
</comment>
<sequence length="141" mass="16448">MPKNKGKGGKNRRRGKNENEQKRELQFKEEGQEYAQVLRMLGNGRLEASCFDGEKRLCHISGRLRKKEWINNGDIILIQLRDYQNDKADVILRYNVDEARNLKTYGELPETARINETDAFDDVEDIPFEFVAEDDIDIDTL</sequence>
<accession>Q54YJ6</accession>
<evidence type="ECO:0000250" key="1"/>
<evidence type="ECO:0000256" key="2">
    <source>
        <dbReference type="SAM" id="MobiDB-lite"/>
    </source>
</evidence>
<evidence type="ECO:0000305" key="3"/>
<keyword id="KW-0396">Initiation factor</keyword>
<keyword id="KW-0648">Protein biosynthesis</keyword>
<keyword id="KW-1185">Reference proteome</keyword>
<reference key="1">
    <citation type="journal article" date="2005" name="Nature">
        <title>The genome of the social amoeba Dictyostelium discoideum.</title>
        <authorList>
            <person name="Eichinger L."/>
            <person name="Pachebat J.A."/>
            <person name="Gloeckner G."/>
            <person name="Rajandream M.A."/>
            <person name="Sucgang R."/>
            <person name="Berriman M."/>
            <person name="Song J."/>
            <person name="Olsen R."/>
            <person name="Szafranski K."/>
            <person name="Xu Q."/>
            <person name="Tunggal B."/>
            <person name="Kummerfeld S."/>
            <person name="Madera M."/>
            <person name="Konfortov B.A."/>
            <person name="Rivero F."/>
            <person name="Bankier A.T."/>
            <person name="Lehmann R."/>
            <person name="Hamlin N."/>
            <person name="Davies R."/>
            <person name="Gaudet P."/>
            <person name="Fey P."/>
            <person name="Pilcher K."/>
            <person name="Chen G."/>
            <person name="Saunders D."/>
            <person name="Sodergren E.J."/>
            <person name="Davis P."/>
            <person name="Kerhornou A."/>
            <person name="Nie X."/>
            <person name="Hall N."/>
            <person name="Anjard C."/>
            <person name="Hemphill L."/>
            <person name="Bason N."/>
            <person name="Farbrother P."/>
            <person name="Desany B."/>
            <person name="Just E."/>
            <person name="Morio T."/>
            <person name="Rost R."/>
            <person name="Churcher C.M."/>
            <person name="Cooper J."/>
            <person name="Haydock S."/>
            <person name="van Driessche N."/>
            <person name="Cronin A."/>
            <person name="Goodhead I."/>
            <person name="Muzny D.M."/>
            <person name="Mourier T."/>
            <person name="Pain A."/>
            <person name="Lu M."/>
            <person name="Harper D."/>
            <person name="Lindsay R."/>
            <person name="Hauser H."/>
            <person name="James K.D."/>
            <person name="Quiles M."/>
            <person name="Madan Babu M."/>
            <person name="Saito T."/>
            <person name="Buchrieser C."/>
            <person name="Wardroper A."/>
            <person name="Felder M."/>
            <person name="Thangavelu M."/>
            <person name="Johnson D."/>
            <person name="Knights A."/>
            <person name="Loulseged H."/>
            <person name="Mungall K.L."/>
            <person name="Oliver K."/>
            <person name="Price C."/>
            <person name="Quail M.A."/>
            <person name="Urushihara H."/>
            <person name="Hernandez J."/>
            <person name="Rabbinowitsch E."/>
            <person name="Steffen D."/>
            <person name="Sanders M."/>
            <person name="Ma J."/>
            <person name="Kohara Y."/>
            <person name="Sharp S."/>
            <person name="Simmonds M.N."/>
            <person name="Spiegler S."/>
            <person name="Tivey A."/>
            <person name="Sugano S."/>
            <person name="White B."/>
            <person name="Walker D."/>
            <person name="Woodward J.R."/>
            <person name="Winckler T."/>
            <person name="Tanaka Y."/>
            <person name="Shaulsky G."/>
            <person name="Schleicher M."/>
            <person name="Weinstock G.M."/>
            <person name="Rosenthal A."/>
            <person name="Cox E.C."/>
            <person name="Chisholm R.L."/>
            <person name="Gibbs R.A."/>
            <person name="Loomis W.F."/>
            <person name="Platzer M."/>
            <person name="Kay R.R."/>
            <person name="Williams J.G."/>
            <person name="Dear P.H."/>
            <person name="Noegel A.A."/>
            <person name="Barrell B.G."/>
            <person name="Kuspa A."/>
        </authorList>
    </citation>
    <scope>NUCLEOTIDE SEQUENCE [LARGE SCALE GENOMIC DNA]</scope>
    <source>
        <strain>AX4</strain>
    </source>
</reference>
<gene>
    <name type="primary">eif1a</name>
    <name type="ORF">DDB_G0278205</name>
</gene>
<feature type="chain" id="PRO_0000328352" description="Eukaryotic translation initiation factor 1A">
    <location>
        <begin position="1"/>
        <end position="141"/>
    </location>
</feature>
<feature type="domain" description="S1-like">
    <location>
        <begin position="21"/>
        <end position="95"/>
    </location>
</feature>
<feature type="region of interest" description="Disordered" evidence="2">
    <location>
        <begin position="1"/>
        <end position="28"/>
    </location>
</feature>
<feature type="compositionally biased region" description="Basic residues" evidence="2">
    <location>
        <begin position="1"/>
        <end position="15"/>
    </location>
</feature>
<feature type="compositionally biased region" description="Basic and acidic residues" evidence="2">
    <location>
        <begin position="16"/>
        <end position="28"/>
    </location>
</feature>
<dbReference type="EMBL" id="AAFI02000023">
    <property type="protein sequence ID" value="EAL68275.1"/>
    <property type="molecule type" value="Genomic_DNA"/>
</dbReference>
<dbReference type="RefSeq" id="XP_642206.1">
    <property type="nucleotide sequence ID" value="XM_637114.1"/>
</dbReference>
<dbReference type="SMR" id="Q54YJ6"/>
<dbReference type="FunCoup" id="Q54YJ6">
    <property type="interactions" value="813"/>
</dbReference>
<dbReference type="STRING" id="44689.Q54YJ6"/>
<dbReference type="PaxDb" id="44689-DDB0234174"/>
<dbReference type="EnsemblProtists" id="EAL68275">
    <property type="protein sequence ID" value="EAL68275"/>
    <property type="gene ID" value="DDB_G0278205"/>
</dbReference>
<dbReference type="GeneID" id="8621413"/>
<dbReference type="KEGG" id="ddi:DDB_G0278205"/>
<dbReference type="dictyBase" id="DDB_G0278205">
    <property type="gene designation" value="eIF1a"/>
</dbReference>
<dbReference type="VEuPathDB" id="AmoebaDB:DDB_G0278205"/>
<dbReference type="eggNOG" id="KOG3403">
    <property type="taxonomic scope" value="Eukaryota"/>
</dbReference>
<dbReference type="HOGENOM" id="CLU_109098_0_1_1"/>
<dbReference type="InParanoid" id="Q54YJ6"/>
<dbReference type="OMA" id="RRVMMHA"/>
<dbReference type="PhylomeDB" id="Q54YJ6"/>
<dbReference type="Reactome" id="R-DDI-156827">
    <property type="pathway name" value="L13a-mediated translational silencing of Ceruloplasmin expression"/>
</dbReference>
<dbReference type="Reactome" id="R-DDI-72689">
    <property type="pathway name" value="Formation of a pool of free 40S subunits"/>
</dbReference>
<dbReference type="Reactome" id="R-DDI-72695">
    <property type="pathway name" value="Formation of the ternary complex, and subsequently, the 43S complex"/>
</dbReference>
<dbReference type="Reactome" id="R-DDI-72702">
    <property type="pathway name" value="Ribosomal scanning and start codon recognition"/>
</dbReference>
<dbReference type="PRO" id="PR:Q54YJ6"/>
<dbReference type="Proteomes" id="UP000002195">
    <property type="component" value="Chromosome 3"/>
</dbReference>
<dbReference type="GO" id="GO:0005737">
    <property type="term" value="C:cytoplasm"/>
    <property type="evidence" value="ECO:0000318"/>
    <property type="project" value="GO_Central"/>
</dbReference>
<dbReference type="GO" id="GO:0003723">
    <property type="term" value="F:RNA binding"/>
    <property type="evidence" value="ECO:0007669"/>
    <property type="project" value="InterPro"/>
</dbReference>
<dbReference type="GO" id="GO:0003743">
    <property type="term" value="F:translation initiation factor activity"/>
    <property type="evidence" value="ECO:0000318"/>
    <property type="project" value="GO_Central"/>
</dbReference>
<dbReference type="GO" id="GO:0006413">
    <property type="term" value="P:translational initiation"/>
    <property type="evidence" value="ECO:0000318"/>
    <property type="project" value="GO_Central"/>
</dbReference>
<dbReference type="CDD" id="cd05793">
    <property type="entry name" value="S1_IF1A"/>
    <property type="match status" value="1"/>
</dbReference>
<dbReference type="Gene3D" id="2.40.50.140">
    <property type="entry name" value="Nucleic acid-binding proteins"/>
    <property type="match status" value="1"/>
</dbReference>
<dbReference type="HAMAP" id="MF_00216">
    <property type="entry name" value="aIF_1A"/>
    <property type="match status" value="1"/>
</dbReference>
<dbReference type="InterPro" id="IPR012340">
    <property type="entry name" value="NA-bd_OB-fold"/>
</dbReference>
<dbReference type="InterPro" id="IPR006196">
    <property type="entry name" value="RNA-binding_domain_S1_IF1"/>
</dbReference>
<dbReference type="InterPro" id="IPR001253">
    <property type="entry name" value="TIF_eIF-1A"/>
</dbReference>
<dbReference type="InterPro" id="IPR018104">
    <property type="entry name" value="TIF_eIF-1A_CS"/>
</dbReference>
<dbReference type="NCBIfam" id="TIGR00523">
    <property type="entry name" value="eIF-1A"/>
    <property type="match status" value="1"/>
</dbReference>
<dbReference type="PANTHER" id="PTHR21668">
    <property type="entry name" value="EIF-1A"/>
    <property type="match status" value="1"/>
</dbReference>
<dbReference type="Pfam" id="PF01176">
    <property type="entry name" value="eIF-1a"/>
    <property type="match status" value="1"/>
</dbReference>
<dbReference type="SMART" id="SM00652">
    <property type="entry name" value="eIF1a"/>
    <property type="match status" value="1"/>
</dbReference>
<dbReference type="SUPFAM" id="SSF50249">
    <property type="entry name" value="Nucleic acid-binding proteins"/>
    <property type="match status" value="1"/>
</dbReference>
<dbReference type="PROSITE" id="PS01262">
    <property type="entry name" value="IF1A"/>
    <property type="match status" value="1"/>
</dbReference>
<dbReference type="PROSITE" id="PS50832">
    <property type="entry name" value="S1_IF1_TYPE"/>
    <property type="match status" value="1"/>
</dbReference>
<name>IF1A_DICDI</name>